<proteinExistence type="inferred from homology"/>
<name>KAD_COXBR</name>
<evidence type="ECO:0000255" key="1">
    <source>
        <dbReference type="HAMAP-Rule" id="MF_00235"/>
    </source>
</evidence>
<accession>A9NBU5</accession>
<keyword id="KW-0067">ATP-binding</keyword>
<keyword id="KW-0963">Cytoplasm</keyword>
<keyword id="KW-0418">Kinase</keyword>
<keyword id="KW-0545">Nucleotide biosynthesis</keyword>
<keyword id="KW-0547">Nucleotide-binding</keyword>
<keyword id="KW-0808">Transferase</keyword>
<protein>
    <recommendedName>
        <fullName evidence="1">Adenylate kinase</fullName>
        <shortName evidence="1">AK</shortName>
        <ecNumber evidence="1">2.7.4.3</ecNumber>
    </recommendedName>
    <alternativeName>
        <fullName evidence="1">ATP-AMP transphosphorylase</fullName>
    </alternativeName>
    <alternativeName>
        <fullName evidence="1">ATP:AMP phosphotransferase</fullName>
    </alternativeName>
    <alternativeName>
        <fullName evidence="1">Adenylate monophosphate kinase</fullName>
    </alternativeName>
</protein>
<gene>
    <name evidence="1" type="primary">adk</name>
    <name type="ordered locus">COXBURSA331_A0563</name>
</gene>
<organism>
    <name type="scientific">Coxiella burnetii (strain RSA 331 / Henzerling II)</name>
    <dbReference type="NCBI Taxonomy" id="360115"/>
    <lineage>
        <taxon>Bacteria</taxon>
        <taxon>Pseudomonadati</taxon>
        <taxon>Pseudomonadota</taxon>
        <taxon>Gammaproteobacteria</taxon>
        <taxon>Legionellales</taxon>
        <taxon>Coxiellaceae</taxon>
        <taxon>Coxiella</taxon>
    </lineage>
</organism>
<dbReference type="EC" id="2.7.4.3" evidence="1"/>
<dbReference type="EMBL" id="CP000890">
    <property type="protein sequence ID" value="ABX78020.1"/>
    <property type="molecule type" value="Genomic_DNA"/>
</dbReference>
<dbReference type="RefSeq" id="WP_005771364.1">
    <property type="nucleotide sequence ID" value="NC_010117.1"/>
</dbReference>
<dbReference type="SMR" id="A9NBU5"/>
<dbReference type="KEGG" id="cbs:COXBURSA331_A0563"/>
<dbReference type="HOGENOM" id="CLU_032354_1_2_6"/>
<dbReference type="UniPathway" id="UPA00588">
    <property type="reaction ID" value="UER00649"/>
</dbReference>
<dbReference type="GO" id="GO:0005737">
    <property type="term" value="C:cytoplasm"/>
    <property type="evidence" value="ECO:0007669"/>
    <property type="project" value="UniProtKB-SubCell"/>
</dbReference>
<dbReference type="GO" id="GO:0004017">
    <property type="term" value="F:adenylate kinase activity"/>
    <property type="evidence" value="ECO:0007669"/>
    <property type="project" value="UniProtKB-UniRule"/>
</dbReference>
<dbReference type="GO" id="GO:0005524">
    <property type="term" value="F:ATP binding"/>
    <property type="evidence" value="ECO:0007669"/>
    <property type="project" value="UniProtKB-UniRule"/>
</dbReference>
<dbReference type="GO" id="GO:0044209">
    <property type="term" value="P:AMP salvage"/>
    <property type="evidence" value="ECO:0007669"/>
    <property type="project" value="UniProtKB-UniRule"/>
</dbReference>
<dbReference type="CDD" id="cd01428">
    <property type="entry name" value="ADK"/>
    <property type="match status" value="1"/>
</dbReference>
<dbReference type="FunFam" id="3.40.50.300:FF:000106">
    <property type="entry name" value="Adenylate kinase mitochondrial"/>
    <property type="match status" value="1"/>
</dbReference>
<dbReference type="Gene3D" id="3.40.50.300">
    <property type="entry name" value="P-loop containing nucleotide triphosphate hydrolases"/>
    <property type="match status" value="1"/>
</dbReference>
<dbReference type="HAMAP" id="MF_00235">
    <property type="entry name" value="Adenylate_kinase_Adk"/>
    <property type="match status" value="1"/>
</dbReference>
<dbReference type="InterPro" id="IPR006259">
    <property type="entry name" value="Adenyl_kin_sub"/>
</dbReference>
<dbReference type="InterPro" id="IPR000850">
    <property type="entry name" value="Adenylat/UMP-CMP_kin"/>
</dbReference>
<dbReference type="InterPro" id="IPR033690">
    <property type="entry name" value="Adenylat_kinase_CS"/>
</dbReference>
<dbReference type="InterPro" id="IPR007862">
    <property type="entry name" value="Adenylate_kinase_lid-dom"/>
</dbReference>
<dbReference type="InterPro" id="IPR027417">
    <property type="entry name" value="P-loop_NTPase"/>
</dbReference>
<dbReference type="NCBIfam" id="TIGR01351">
    <property type="entry name" value="adk"/>
    <property type="match status" value="1"/>
</dbReference>
<dbReference type="NCBIfam" id="NF001379">
    <property type="entry name" value="PRK00279.1-1"/>
    <property type="match status" value="1"/>
</dbReference>
<dbReference type="NCBIfam" id="NF001380">
    <property type="entry name" value="PRK00279.1-2"/>
    <property type="match status" value="1"/>
</dbReference>
<dbReference type="NCBIfam" id="NF001381">
    <property type="entry name" value="PRK00279.1-3"/>
    <property type="match status" value="1"/>
</dbReference>
<dbReference type="NCBIfam" id="NF011100">
    <property type="entry name" value="PRK14527.1"/>
    <property type="match status" value="1"/>
</dbReference>
<dbReference type="PANTHER" id="PTHR23359">
    <property type="entry name" value="NUCLEOTIDE KINASE"/>
    <property type="match status" value="1"/>
</dbReference>
<dbReference type="Pfam" id="PF00406">
    <property type="entry name" value="ADK"/>
    <property type="match status" value="1"/>
</dbReference>
<dbReference type="Pfam" id="PF05191">
    <property type="entry name" value="ADK_lid"/>
    <property type="match status" value="1"/>
</dbReference>
<dbReference type="PRINTS" id="PR00094">
    <property type="entry name" value="ADENYLTKNASE"/>
</dbReference>
<dbReference type="SUPFAM" id="SSF52540">
    <property type="entry name" value="P-loop containing nucleoside triphosphate hydrolases"/>
    <property type="match status" value="1"/>
</dbReference>
<dbReference type="PROSITE" id="PS00113">
    <property type="entry name" value="ADENYLATE_KINASE"/>
    <property type="match status" value="1"/>
</dbReference>
<sequence>MPLRIILLGLPGAGKGTQADFIAKHLDIPKISTGDMLRAAVKAKTPLGLEVKKIMESGGLVSDEIMIALVKERVKLPDCHKGYLLDGFPRTLAQADALNAAAIKIDLVIEIDVPEEEIIERMTGRLIHPASGRTYHRRYNPPKVADKDDVTGEPLIQRADDREETVRHRLAVYRKQTSPLSDYYAQWEKSGDPQAPKYFRISGLGSMEEVRERILQVFEAYDPRDSGNLEH</sequence>
<reference key="1">
    <citation type="submission" date="2007-11" db="EMBL/GenBank/DDBJ databases">
        <title>Genome sequencing of phylogenetically and phenotypically diverse Coxiella burnetii isolates.</title>
        <authorList>
            <person name="Seshadri R."/>
            <person name="Samuel J.E."/>
        </authorList>
    </citation>
    <scope>NUCLEOTIDE SEQUENCE [LARGE SCALE GENOMIC DNA]</scope>
    <source>
        <strain>RSA 331 / Henzerling II</strain>
    </source>
</reference>
<comment type="function">
    <text evidence="1">Catalyzes the reversible transfer of the terminal phosphate group between ATP and AMP. Plays an important role in cellular energy homeostasis and in adenine nucleotide metabolism.</text>
</comment>
<comment type="catalytic activity">
    <reaction evidence="1">
        <text>AMP + ATP = 2 ADP</text>
        <dbReference type="Rhea" id="RHEA:12973"/>
        <dbReference type="ChEBI" id="CHEBI:30616"/>
        <dbReference type="ChEBI" id="CHEBI:456215"/>
        <dbReference type="ChEBI" id="CHEBI:456216"/>
        <dbReference type="EC" id="2.7.4.3"/>
    </reaction>
</comment>
<comment type="pathway">
    <text evidence="1">Purine metabolism; AMP biosynthesis via salvage pathway; AMP from ADP: step 1/1.</text>
</comment>
<comment type="subunit">
    <text evidence="1">Monomer.</text>
</comment>
<comment type="subcellular location">
    <subcellularLocation>
        <location evidence="1">Cytoplasm</location>
    </subcellularLocation>
</comment>
<comment type="domain">
    <text evidence="1">Consists of three domains, a large central CORE domain and two small peripheral domains, NMPbind and LID, which undergo movements during catalysis. The LID domain closes over the site of phosphoryl transfer upon ATP binding. Assembling and dissambling the active center during each catalytic cycle provides an effective means to prevent ATP hydrolysis.</text>
</comment>
<comment type="similarity">
    <text evidence="1">Belongs to the adenylate kinase family.</text>
</comment>
<feature type="chain" id="PRO_1000078271" description="Adenylate kinase">
    <location>
        <begin position="1"/>
        <end position="231"/>
    </location>
</feature>
<feature type="region of interest" description="NMP" evidence="1">
    <location>
        <begin position="32"/>
        <end position="61"/>
    </location>
</feature>
<feature type="region of interest" description="LID" evidence="1">
    <location>
        <begin position="124"/>
        <end position="161"/>
    </location>
</feature>
<feature type="binding site" evidence="1">
    <location>
        <begin position="12"/>
        <end position="17"/>
    </location>
    <ligand>
        <name>ATP</name>
        <dbReference type="ChEBI" id="CHEBI:30616"/>
    </ligand>
</feature>
<feature type="binding site" evidence="1">
    <location>
        <position position="33"/>
    </location>
    <ligand>
        <name>AMP</name>
        <dbReference type="ChEBI" id="CHEBI:456215"/>
    </ligand>
</feature>
<feature type="binding site" evidence="1">
    <location>
        <position position="38"/>
    </location>
    <ligand>
        <name>AMP</name>
        <dbReference type="ChEBI" id="CHEBI:456215"/>
    </ligand>
</feature>
<feature type="binding site" evidence="1">
    <location>
        <begin position="59"/>
        <end position="61"/>
    </location>
    <ligand>
        <name>AMP</name>
        <dbReference type="ChEBI" id="CHEBI:456215"/>
    </ligand>
</feature>
<feature type="binding site" evidence="1">
    <location>
        <begin position="87"/>
        <end position="90"/>
    </location>
    <ligand>
        <name>AMP</name>
        <dbReference type="ChEBI" id="CHEBI:456215"/>
    </ligand>
</feature>
<feature type="binding site" evidence="1">
    <location>
        <position position="94"/>
    </location>
    <ligand>
        <name>AMP</name>
        <dbReference type="ChEBI" id="CHEBI:456215"/>
    </ligand>
</feature>
<feature type="binding site" evidence="1">
    <location>
        <position position="125"/>
    </location>
    <ligand>
        <name>ATP</name>
        <dbReference type="ChEBI" id="CHEBI:30616"/>
    </ligand>
</feature>
<feature type="binding site" evidence="1">
    <location>
        <begin position="134"/>
        <end position="135"/>
    </location>
    <ligand>
        <name>ATP</name>
        <dbReference type="ChEBI" id="CHEBI:30616"/>
    </ligand>
</feature>
<feature type="binding site" evidence="1">
    <location>
        <position position="158"/>
    </location>
    <ligand>
        <name>AMP</name>
        <dbReference type="ChEBI" id="CHEBI:456215"/>
    </ligand>
</feature>
<feature type="binding site" evidence="1">
    <location>
        <position position="169"/>
    </location>
    <ligand>
        <name>AMP</name>
        <dbReference type="ChEBI" id="CHEBI:456215"/>
    </ligand>
</feature>
<feature type="binding site" evidence="1">
    <location>
        <position position="205"/>
    </location>
    <ligand>
        <name>ATP</name>
        <dbReference type="ChEBI" id="CHEBI:30616"/>
    </ligand>
</feature>